<organism>
    <name type="scientific">Paracoccus versutus</name>
    <name type="common">Thiobacillus versutus</name>
    <dbReference type="NCBI Taxonomy" id="34007"/>
    <lineage>
        <taxon>Bacteria</taxon>
        <taxon>Pseudomonadati</taxon>
        <taxon>Pseudomonadota</taxon>
        <taxon>Alphaproteobacteria</taxon>
        <taxon>Rhodobacterales</taxon>
        <taxon>Paracoccaceae</taxon>
        <taxon>Paracoccus</taxon>
    </lineage>
</organism>
<sequence>MISAKTLRPAIAAIALFAIGATGAWAQDKITVTSEKPVAAADVPADAVVVGIEKMKYLTPEVTIKAGETVYWVNGEVMPHNVAFKKGIVGEDAFRGEMMTKDQAYAITFNEAGSYDYFCTPHPFMRGKVIVE</sequence>
<keyword id="KW-0002">3D-structure</keyword>
<keyword id="KW-0186">Copper</keyword>
<keyword id="KW-0903">Direct protein sequencing</keyword>
<keyword id="KW-0249">Electron transport</keyword>
<keyword id="KW-0479">Metal-binding</keyword>
<keyword id="KW-0574">Periplasm</keyword>
<keyword id="KW-0873">Pyrrolidone carboxylic acid</keyword>
<keyword id="KW-0732">Signal</keyword>
<keyword id="KW-0813">Transport</keyword>
<dbReference type="EMBL" id="M58001">
    <property type="protein sequence ID" value="AAA50571.1"/>
    <property type="molecule type" value="Genomic_DNA"/>
</dbReference>
<dbReference type="PIR" id="S19732">
    <property type="entry name" value="A23706"/>
</dbReference>
<dbReference type="RefSeq" id="WP_036750422.1">
    <property type="nucleotide sequence ID" value="NZ_QUMX01000042.1"/>
</dbReference>
<dbReference type="PDB" id="1ID2">
    <property type="method" value="X-ray"/>
    <property type="resolution" value="2.15 A"/>
    <property type="chains" value="A/B/C=27-132"/>
</dbReference>
<dbReference type="PDB" id="3C75">
    <property type="method" value="X-ray"/>
    <property type="resolution" value="2.50 A"/>
    <property type="chains" value="A/B=1-132"/>
</dbReference>
<dbReference type="PDBsum" id="1ID2"/>
<dbReference type="PDBsum" id="3C75"/>
<dbReference type="BMRB" id="P22365"/>
<dbReference type="SMR" id="P22365"/>
<dbReference type="eggNOG" id="COG3794">
    <property type="taxonomic scope" value="Bacteria"/>
</dbReference>
<dbReference type="OrthoDB" id="9796416at2"/>
<dbReference type="UniPathway" id="UPA00895"/>
<dbReference type="EvolutionaryTrace" id="P22365"/>
<dbReference type="GO" id="GO:0042597">
    <property type="term" value="C:periplasmic space"/>
    <property type="evidence" value="ECO:0007669"/>
    <property type="project" value="UniProtKB-SubCell"/>
</dbReference>
<dbReference type="GO" id="GO:0005507">
    <property type="term" value="F:copper ion binding"/>
    <property type="evidence" value="ECO:0007669"/>
    <property type="project" value="InterPro"/>
</dbReference>
<dbReference type="GO" id="GO:0009055">
    <property type="term" value="F:electron transfer activity"/>
    <property type="evidence" value="ECO:0007669"/>
    <property type="project" value="InterPro"/>
</dbReference>
<dbReference type="CDD" id="cd13921">
    <property type="entry name" value="Amicyanin"/>
    <property type="match status" value="1"/>
</dbReference>
<dbReference type="Gene3D" id="2.60.40.420">
    <property type="entry name" value="Cupredoxins - blue copper proteins"/>
    <property type="match status" value="1"/>
</dbReference>
<dbReference type="InterPro" id="IPR035668">
    <property type="entry name" value="Amicyanin"/>
</dbReference>
<dbReference type="InterPro" id="IPR002386">
    <property type="entry name" value="Amicyanin/Pseudoazurin"/>
</dbReference>
<dbReference type="InterPro" id="IPR013475">
    <property type="entry name" value="Amicyanin_Para/Methyl"/>
</dbReference>
<dbReference type="InterPro" id="IPR000923">
    <property type="entry name" value="BlueCu_1"/>
</dbReference>
<dbReference type="InterPro" id="IPR028871">
    <property type="entry name" value="BlueCu_1_BS"/>
</dbReference>
<dbReference type="InterPro" id="IPR001235">
    <property type="entry name" value="Copper_blue_Plastocyanin"/>
</dbReference>
<dbReference type="InterPro" id="IPR008972">
    <property type="entry name" value="Cupredoxin"/>
</dbReference>
<dbReference type="InterPro" id="IPR052721">
    <property type="entry name" value="ET_Amicyanin"/>
</dbReference>
<dbReference type="NCBIfam" id="TIGR02657">
    <property type="entry name" value="amicyanin"/>
    <property type="match status" value="1"/>
</dbReference>
<dbReference type="PANTHER" id="PTHR36507">
    <property type="entry name" value="BLL1555 PROTEIN"/>
    <property type="match status" value="1"/>
</dbReference>
<dbReference type="PANTHER" id="PTHR36507:SF1">
    <property type="entry name" value="BLL1555 PROTEIN"/>
    <property type="match status" value="1"/>
</dbReference>
<dbReference type="Pfam" id="PF00127">
    <property type="entry name" value="Copper-bind"/>
    <property type="match status" value="1"/>
</dbReference>
<dbReference type="PRINTS" id="PR00155">
    <property type="entry name" value="AMICYANIN"/>
</dbReference>
<dbReference type="PRINTS" id="PR00156">
    <property type="entry name" value="COPPERBLUE"/>
</dbReference>
<dbReference type="SUPFAM" id="SSF49503">
    <property type="entry name" value="Cupredoxins"/>
    <property type="match status" value="1"/>
</dbReference>
<dbReference type="PROSITE" id="PS00196">
    <property type="entry name" value="COPPER_BLUE"/>
    <property type="match status" value="1"/>
</dbReference>
<protein>
    <recommendedName>
        <fullName>Amicyanin</fullName>
    </recommendedName>
</protein>
<proteinExistence type="evidence at protein level"/>
<name>AMCY_PARVE</name>
<reference key="1">
    <citation type="journal article" date="1991" name="Eur. J. Biochem.">
        <title>Cloning, sequencing and expression studies of the genes encoding amicyanin and the beta-subunit of methylamine dehydrogenase from Thiobacillus versutus.</title>
        <authorList>
            <person name="Ubbink M."/>
            <person name="van Kleef M.A."/>
            <person name="Kleinjan D.J."/>
            <person name="Hoitink C.W."/>
            <person name="Huitema F."/>
            <person name="Beintema J.J."/>
            <person name="Duine J.A."/>
            <person name="Canters G.W."/>
        </authorList>
    </citation>
    <scope>NUCLEOTIDE SEQUENCE [GENOMIC DNA]</scope>
</reference>
<reference key="2">
    <citation type="journal article" date="1991" name="J. Biol. Chem.">
        <title>The structural homology of amicyanin from Thiobacillus versutus to plant plastocyanins.</title>
        <authorList>
            <person name="van Beeumen J."/>
            <person name="van Bun S."/>
            <person name="Canters G.W."/>
            <person name="Lommen A."/>
            <person name="Chothia C."/>
        </authorList>
    </citation>
    <scope>PROTEIN SEQUENCE OF 27-132</scope>
    <scope>PYROGLUTAMATE FORMATION AT GLN-27</scope>
</reference>
<reference key="3">
    <citation type="journal article" date="1994" name="J. Mol. Biol.">
        <title>Crystal structure analysis and refinement at 2.15-A resolution of amicyanin, a type I blue copper protein, from Thiobacillus versutus.</title>
        <authorList>
            <person name="Romero A."/>
            <person name="Nar H."/>
            <person name="Huber R."/>
            <person name="Messerchmidt A."/>
            <person name="Kalverda A.P."/>
            <person name="Canters G.W."/>
            <person name="Durley R."/>
            <person name="Mathews F.S."/>
        </authorList>
    </citation>
    <scope>X-RAY CRYSTALLOGRAPHY (2.15 ANGSTROMS)</scope>
</reference>
<reference key="4">
    <citation type="journal article" date="1991" name="Eur. J. Biochem.">
        <title>Assignment of the 600-MHz 1H-NMR spectrum of amicyanin from Thiobacillus versutus by two-dimensional NMR methods provides information on secondary structure.</title>
        <authorList>
            <person name="Lommen A."/>
            <person name="Wijmenga S."/>
            <person name="Jilbers C.W."/>
            <person name="Canters G.W."/>
        </authorList>
    </citation>
    <scope>STRUCTURE BY NMR</scope>
</reference>
<reference key="5">
    <citation type="journal article" date="1994" name="J. Mol. Biol.">
        <title>Solution structure of the type 1 blue copper protein amicyanin from Thiobacillus versutus.</title>
        <authorList>
            <person name="Kalverda A.P."/>
            <person name="Wymenga S.S."/>
            <person name="Lommen A."/>
            <person name="van de Ven F.J.M."/>
            <person name="Hilbers C.W."/>
            <person name="Canters G.W."/>
        </authorList>
    </citation>
    <scope>STRUCTURE BY NMR</scope>
</reference>
<reference key="6">
    <citation type="journal article" date="1997" name="Biochemistry">
        <title>A 1H NMR study of the paramagnetic active site of the CuA variant of amicyanin.</title>
        <authorList>
            <person name="Dennison C."/>
            <person name="Berg A."/>
            <person name="Canters G.W."/>
        </authorList>
    </citation>
    <scope>STRUCTURE BY NMR</scope>
</reference>
<feature type="signal peptide" evidence="1">
    <location>
        <begin position="1"/>
        <end position="26"/>
    </location>
</feature>
<feature type="chain" id="PRO_0000002845" description="Amicyanin">
    <location>
        <begin position="27"/>
        <end position="132"/>
    </location>
</feature>
<feature type="domain" description="Plastocyanin-like">
    <location>
        <begin position="27"/>
        <end position="132"/>
    </location>
</feature>
<feature type="binding site">
    <location>
        <position position="80"/>
    </location>
    <ligand>
        <name>Cu cation</name>
        <dbReference type="ChEBI" id="CHEBI:23378"/>
    </ligand>
</feature>
<feature type="binding site">
    <location>
        <position position="119"/>
    </location>
    <ligand>
        <name>Cu cation</name>
        <dbReference type="ChEBI" id="CHEBI:23378"/>
    </ligand>
</feature>
<feature type="binding site">
    <location>
        <position position="122"/>
    </location>
    <ligand>
        <name>Cu cation</name>
        <dbReference type="ChEBI" id="CHEBI:23378"/>
    </ligand>
</feature>
<feature type="binding site">
    <location>
        <position position="125"/>
    </location>
    <ligand>
        <name>Cu cation</name>
        <dbReference type="ChEBI" id="CHEBI:23378"/>
    </ligand>
</feature>
<feature type="modified residue" description="Pyrrolidone carboxylic acid" evidence="1">
    <location>
        <position position="27"/>
    </location>
</feature>
<feature type="strand" evidence="2">
    <location>
        <begin position="29"/>
        <end position="31"/>
    </location>
</feature>
<feature type="helix" evidence="2">
    <location>
        <begin position="40"/>
        <end position="42"/>
    </location>
</feature>
<feature type="strand" evidence="2">
    <location>
        <begin position="48"/>
        <end position="53"/>
    </location>
</feature>
<feature type="strand" evidence="2">
    <location>
        <begin position="56"/>
        <end position="64"/>
    </location>
</feature>
<feature type="strand" evidence="2">
    <location>
        <begin position="69"/>
        <end position="74"/>
    </location>
</feature>
<feature type="strand" evidence="2">
    <location>
        <begin position="76"/>
        <end position="78"/>
    </location>
</feature>
<feature type="strand" evidence="2">
    <location>
        <begin position="88"/>
        <end position="92"/>
    </location>
</feature>
<feature type="strand" evidence="2">
    <location>
        <begin position="103"/>
        <end position="109"/>
    </location>
</feature>
<feature type="strand" evidence="2">
    <location>
        <begin position="113"/>
        <end position="118"/>
    </location>
</feature>
<feature type="strand" evidence="2">
    <location>
        <begin position="126"/>
        <end position="131"/>
    </location>
</feature>
<comment type="function">
    <text>Primary acceptor of electrons from methylamine dehydrogenase. Passes those electrons on either a soluble cytochrome c or to pseudoazurin.</text>
</comment>
<comment type="cofactor">
    <cofactor>
        <name>Cu cation</name>
        <dbReference type="ChEBI" id="CHEBI:23378"/>
    </cofactor>
    <text>Binds 1 copper ion per subunit.</text>
</comment>
<comment type="pathway">
    <text>One-carbon metabolism; methylamine degradation.</text>
</comment>
<comment type="subcellular location">
    <subcellularLocation>
        <location>Periplasm</location>
    </subcellularLocation>
</comment>
<evidence type="ECO:0000269" key="1">
    <source>
    </source>
</evidence>
<evidence type="ECO:0007829" key="2">
    <source>
        <dbReference type="PDB" id="1ID2"/>
    </source>
</evidence>
<gene>
    <name type="primary">mauC</name>
    <name type="synonym">ami</name>
</gene>
<accession>P22365</accession>